<accession>Q7VZX5</accession>
<proteinExistence type="inferred from homology"/>
<protein>
    <recommendedName>
        <fullName evidence="1">Large ribosomal subunit protein bL27</fullName>
    </recommendedName>
    <alternativeName>
        <fullName evidence="3">50S ribosomal protein L27</fullName>
    </alternativeName>
</protein>
<comment type="similarity">
    <text evidence="1">Belongs to the bacterial ribosomal protein bL27 family.</text>
</comment>
<organism>
    <name type="scientific">Bordetella pertussis (strain Tohama I / ATCC BAA-589 / NCTC 13251)</name>
    <dbReference type="NCBI Taxonomy" id="257313"/>
    <lineage>
        <taxon>Bacteria</taxon>
        <taxon>Pseudomonadati</taxon>
        <taxon>Pseudomonadota</taxon>
        <taxon>Betaproteobacteria</taxon>
        <taxon>Burkholderiales</taxon>
        <taxon>Alcaligenaceae</taxon>
        <taxon>Bordetella</taxon>
    </lineage>
</organism>
<feature type="chain" id="PRO_0000181053" description="Large ribosomal subunit protein bL27">
    <location>
        <begin position="1"/>
        <end position="86"/>
    </location>
</feature>
<feature type="region of interest" description="Disordered" evidence="2">
    <location>
        <begin position="1"/>
        <end position="20"/>
    </location>
</feature>
<feature type="compositionally biased region" description="Gly residues" evidence="2">
    <location>
        <begin position="1"/>
        <end position="10"/>
    </location>
</feature>
<sequence>MAQKKGGGSTRNGRDSESKRLGVKVYGGQSILAGSIIVRQRGTRFHPGVNVGVGKDHTLFALANGKVHFSVKGALNKPTVSVVAAE</sequence>
<evidence type="ECO:0000255" key="1">
    <source>
        <dbReference type="HAMAP-Rule" id="MF_00539"/>
    </source>
</evidence>
<evidence type="ECO:0000256" key="2">
    <source>
        <dbReference type="SAM" id="MobiDB-lite"/>
    </source>
</evidence>
<evidence type="ECO:0000305" key="3"/>
<keyword id="KW-1185">Reference proteome</keyword>
<keyword id="KW-0687">Ribonucleoprotein</keyword>
<keyword id="KW-0689">Ribosomal protein</keyword>
<dbReference type="EMBL" id="BX640413">
    <property type="protein sequence ID" value="CAE41054.1"/>
    <property type="molecule type" value="Genomic_DNA"/>
</dbReference>
<dbReference type="RefSeq" id="NP_879568.1">
    <property type="nucleotide sequence ID" value="NC_002929.2"/>
</dbReference>
<dbReference type="RefSeq" id="WP_003807460.1">
    <property type="nucleotide sequence ID" value="NZ_CP039022.1"/>
</dbReference>
<dbReference type="SMR" id="Q7VZX5"/>
<dbReference type="STRING" id="257313.BP0748"/>
<dbReference type="PaxDb" id="257313-BP0748"/>
<dbReference type="GeneID" id="93206541"/>
<dbReference type="KEGG" id="bpe:BP0748"/>
<dbReference type="PATRIC" id="fig|257313.5.peg.800"/>
<dbReference type="eggNOG" id="COG0211">
    <property type="taxonomic scope" value="Bacteria"/>
</dbReference>
<dbReference type="HOGENOM" id="CLU_095424_4_1_4"/>
<dbReference type="Proteomes" id="UP000002676">
    <property type="component" value="Chromosome"/>
</dbReference>
<dbReference type="GO" id="GO:0022625">
    <property type="term" value="C:cytosolic large ribosomal subunit"/>
    <property type="evidence" value="ECO:0007669"/>
    <property type="project" value="TreeGrafter"/>
</dbReference>
<dbReference type="GO" id="GO:0003735">
    <property type="term" value="F:structural constituent of ribosome"/>
    <property type="evidence" value="ECO:0007669"/>
    <property type="project" value="InterPro"/>
</dbReference>
<dbReference type="GO" id="GO:0006412">
    <property type="term" value="P:translation"/>
    <property type="evidence" value="ECO:0007669"/>
    <property type="project" value="UniProtKB-UniRule"/>
</dbReference>
<dbReference type="FunFam" id="2.40.50.100:FF:000001">
    <property type="entry name" value="50S ribosomal protein L27"/>
    <property type="match status" value="1"/>
</dbReference>
<dbReference type="Gene3D" id="2.40.50.100">
    <property type="match status" value="1"/>
</dbReference>
<dbReference type="HAMAP" id="MF_00539">
    <property type="entry name" value="Ribosomal_bL27"/>
    <property type="match status" value="1"/>
</dbReference>
<dbReference type="InterPro" id="IPR001684">
    <property type="entry name" value="Ribosomal_bL27"/>
</dbReference>
<dbReference type="InterPro" id="IPR018261">
    <property type="entry name" value="Ribosomal_bL27_CS"/>
</dbReference>
<dbReference type="NCBIfam" id="TIGR00062">
    <property type="entry name" value="L27"/>
    <property type="match status" value="1"/>
</dbReference>
<dbReference type="PANTHER" id="PTHR15893:SF0">
    <property type="entry name" value="LARGE RIBOSOMAL SUBUNIT PROTEIN BL27M"/>
    <property type="match status" value="1"/>
</dbReference>
<dbReference type="PANTHER" id="PTHR15893">
    <property type="entry name" value="RIBOSOMAL PROTEIN L27"/>
    <property type="match status" value="1"/>
</dbReference>
<dbReference type="Pfam" id="PF01016">
    <property type="entry name" value="Ribosomal_L27"/>
    <property type="match status" value="1"/>
</dbReference>
<dbReference type="PRINTS" id="PR00063">
    <property type="entry name" value="RIBOSOMALL27"/>
</dbReference>
<dbReference type="SUPFAM" id="SSF110324">
    <property type="entry name" value="Ribosomal L27 protein-like"/>
    <property type="match status" value="1"/>
</dbReference>
<dbReference type="PROSITE" id="PS00831">
    <property type="entry name" value="RIBOSOMAL_L27"/>
    <property type="match status" value="1"/>
</dbReference>
<name>RL27_BORPE</name>
<gene>
    <name evidence="1" type="primary">rpmA</name>
    <name type="ordered locus">BP0748</name>
</gene>
<reference key="1">
    <citation type="journal article" date="2003" name="Nat. Genet.">
        <title>Comparative analysis of the genome sequences of Bordetella pertussis, Bordetella parapertussis and Bordetella bronchiseptica.</title>
        <authorList>
            <person name="Parkhill J."/>
            <person name="Sebaihia M."/>
            <person name="Preston A."/>
            <person name="Murphy L.D."/>
            <person name="Thomson N.R."/>
            <person name="Harris D.E."/>
            <person name="Holden M.T.G."/>
            <person name="Churcher C.M."/>
            <person name="Bentley S.D."/>
            <person name="Mungall K.L."/>
            <person name="Cerdeno-Tarraga A.-M."/>
            <person name="Temple L."/>
            <person name="James K.D."/>
            <person name="Harris B."/>
            <person name="Quail M.A."/>
            <person name="Achtman M."/>
            <person name="Atkin R."/>
            <person name="Baker S."/>
            <person name="Basham D."/>
            <person name="Bason N."/>
            <person name="Cherevach I."/>
            <person name="Chillingworth T."/>
            <person name="Collins M."/>
            <person name="Cronin A."/>
            <person name="Davis P."/>
            <person name="Doggett J."/>
            <person name="Feltwell T."/>
            <person name="Goble A."/>
            <person name="Hamlin N."/>
            <person name="Hauser H."/>
            <person name="Holroyd S."/>
            <person name="Jagels K."/>
            <person name="Leather S."/>
            <person name="Moule S."/>
            <person name="Norberczak H."/>
            <person name="O'Neil S."/>
            <person name="Ormond D."/>
            <person name="Price C."/>
            <person name="Rabbinowitsch E."/>
            <person name="Rutter S."/>
            <person name="Sanders M."/>
            <person name="Saunders D."/>
            <person name="Seeger K."/>
            <person name="Sharp S."/>
            <person name="Simmonds M."/>
            <person name="Skelton J."/>
            <person name="Squares R."/>
            <person name="Squares S."/>
            <person name="Stevens K."/>
            <person name="Unwin L."/>
            <person name="Whitehead S."/>
            <person name="Barrell B.G."/>
            <person name="Maskell D.J."/>
        </authorList>
    </citation>
    <scope>NUCLEOTIDE SEQUENCE [LARGE SCALE GENOMIC DNA]</scope>
    <source>
        <strain>Tohama I / ATCC BAA-589 / NCTC 13251</strain>
    </source>
</reference>